<reference key="1">
    <citation type="journal article" date="2011" name="J. Bacteriol.">
        <title>Comparative genomics of 28 Salmonella enterica isolates: evidence for CRISPR-mediated adaptive sublineage evolution.</title>
        <authorList>
            <person name="Fricke W.F."/>
            <person name="Mammel M.K."/>
            <person name="McDermott P.F."/>
            <person name="Tartera C."/>
            <person name="White D.G."/>
            <person name="Leclerc J.E."/>
            <person name="Ravel J."/>
            <person name="Cebula T.A."/>
        </authorList>
    </citation>
    <scope>NUCLEOTIDE SEQUENCE [LARGE SCALE GENOMIC DNA]</scope>
    <source>
        <strain>SL254</strain>
    </source>
</reference>
<feature type="chain" id="PRO_1000139344" description="GTP 3',8-cyclase">
    <location>
        <begin position="1"/>
        <end position="329"/>
    </location>
</feature>
<feature type="domain" description="Radical SAM core" evidence="2">
    <location>
        <begin position="8"/>
        <end position="234"/>
    </location>
</feature>
<feature type="binding site" evidence="1">
    <location>
        <position position="17"/>
    </location>
    <ligand>
        <name>GTP</name>
        <dbReference type="ChEBI" id="CHEBI:37565"/>
    </ligand>
</feature>
<feature type="binding site" evidence="1">
    <location>
        <position position="24"/>
    </location>
    <ligand>
        <name>[4Fe-4S] cluster</name>
        <dbReference type="ChEBI" id="CHEBI:49883"/>
        <label>1</label>
        <note>4Fe-4S-S-AdoMet</note>
    </ligand>
</feature>
<feature type="binding site" evidence="1">
    <location>
        <position position="28"/>
    </location>
    <ligand>
        <name>[4Fe-4S] cluster</name>
        <dbReference type="ChEBI" id="CHEBI:49883"/>
        <label>1</label>
        <note>4Fe-4S-S-AdoMet</note>
    </ligand>
</feature>
<feature type="binding site" evidence="1">
    <location>
        <position position="30"/>
    </location>
    <ligand>
        <name>S-adenosyl-L-methionine</name>
        <dbReference type="ChEBI" id="CHEBI:59789"/>
    </ligand>
</feature>
<feature type="binding site" evidence="1">
    <location>
        <position position="31"/>
    </location>
    <ligand>
        <name>[4Fe-4S] cluster</name>
        <dbReference type="ChEBI" id="CHEBI:49883"/>
        <label>1</label>
        <note>4Fe-4S-S-AdoMet</note>
    </ligand>
</feature>
<feature type="binding site" evidence="1">
    <location>
        <position position="68"/>
    </location>
    <ligand>
        <name>GTP</name>
        <dbReference type="ChEBI" id="CHEBI:37565"/>
    </ligand>
</feature>
<feature type="binding site" evidence="1">
    <location>
        <position position="72"/>
    </location>
    <ligand>
        <name>S-adenosyl-L-methionine</name>
        <dbReference type="ChEBI" id="CHEBI:59789"/>
    </ligand>
</feature>
<feature type="binding site" evidence="1">
    <location>
        <position position="99"/>
    </location>
    <ligand>
        <name>GTP</name>
        <dbReference type="ChEBI" id="CHEBI:37565"/>
    </ligand>
</feature>
<feature type="binding site" evidence="1">
    <location>
        <position position="123"/>
    </location>
    <ligand>
        <name>S-adenosyl-L-methionine</name>
        <dbReference type="ChEBI" id="CHEBI:59789"/>
    </ligand>
</feature>
<feature type="binding site" evidence="1">
    <location>
        <position position="160"/>
    </location>
    <ligand>
        <name>GTP</name>
        <dbReference type="ChEBI" id="CHEBI:37565"/>
    </ligand>
</feature>
<feature type="binding site" evidence="1">
    <location>
        <position position="194"/>
    </location>
    <ligand>
        <name>S-adenosyl-L-methionine</name>
        <dbReference type="ChEBI" id="CHEBI:59789"/>
    </ligand>
</feature>
<feature type="binding site" evidence="1">
    <location>
        <position position="257"/>
    </location>
    <ligand>
        <name>[4Fe-4S] cluster</name>
        <dbReference type="ChEBI" id="CHEBI:49883"/>
        <label>2</label>
        <note>4Fe-4S-substrate</note>
    </ligand>
</feature>
<feature type="binding site" evidence="1">
    <location>
        <position position="260"/>
    </location>
    <ligand>
        <name>[4Fe-4S] cluster</name>
        <dbReference type="ChEBI" id="CHEBI:49883"/>
        <label>2</label>
        <note>4Fe-4S-substrate</note>
    </ligand>
</feature>
<feature type="binding site" evidence="1">
    <location>
        <begin position="262"/>
        <end position="264"/>
    </location>
    <ligand>
        <name>GTP</name>
        <dbReference type="ChEBI" id="CHEBI:37565"/>
    </ligand>
</feature>
<feature type="binding site" evidence="1">
    <location>
        <position position="274"/>
    </location>
    <ligand>
        <name>[4Fe-4S] cluster</name>
        <dbReference type="ChEBI" id="CHEBI:49883"/>
        <label>2</label>
        <note>4Fe-4S-substrate</note>
    </ligand>
</feature>
<name>MOAA_SALNS</name>
<dbReference type="EC" id="4.1.99.22" evidence="1"/>
<dbReference type="EMBL" id="CP001113">
    <property type="protein sequence ID" value="ACF65466.1"/>
    <property type="molecule type" value="Genomic_DNA"/>
</dbReference>
<dbReference type="RefSeq" id="WP_000168180.1">
    <property type="nucleotide sequence ID" value="NZ_CCMR01000003.1"/>
</dbReference>
<dbReference type="SMR" id="B4SZK4"/>
<dbReference type="KEGG" id="see:SNSL254_A0865"/>
<dbReference type="HOGENOM" id="CLU_009273_0_1_6"/>
<dbReference type="UniPathway" id="UPA00344"/>
<dbReference type="Proteomes" id="UP000008824">
    <property type="component" value="Chromosome"/>
</dbReference>
<dbReference type="GO" id="GO:0051539">
    <property type="term" value="F:4 iron, 4 sulfur cluster binding"/>
    <property type="evidence" value="ECO:0007669"/>
    <property type="project" value="UniProtKB-UniRule"/>
</dbReference>
<dbReference type="GO" id="GO:0061799">
    <property type="term" value="F:cyclic pyranopterin monophosphate synthase activity"/>
    <property type="evidence" value="ECO:0007669"/>
    <property type="project" value="TreeGrafter"/>
</dbReference>
<dbReference type="GO" id="GO:0061798">
    <property type="term" value="F:GTP 3',8'-cyclase activity"/>
    <property type="evidence" value="ECO:0007669"/>
    <property type="project" value="UniProtKB-UniRule"/>
</dbReference>
<dbReference type="GO" id="GO:0005525">
    <property type="term" value="F:GTP binding"/>
    <property type="evidence" value="ECO:0007669"/>
    <property type="project" value="UniProtKB-UniRule"/>
</dbReference>
<dbReference type="GO" id="GO:0046872">
    <property type="term" value="F:metal ion binding"/>
    <property type="evidence" value="ECO:0007669"/>
    <property type="project" value="UniProtKB-KW"/>
</dbReference>
<dbReference type="GO" id="GO:1904047">
    <property type="term" value="F:S-adenosyl-L-methionine binding"/>
    <property type="evidence" value="ECO:0007669"/>
    <property type="project" value="UniProtKB-UniRule"/>
</dbReference>
<dbReference type="GO" id="GO:0006777">
    <property type="term" value="P:Mo-molybdopterin cofactor biosynthetic process"/>
    <property type="evidence" value="ECO:0007669"/>
    <property type="project" value="UniProtKB-UniRule"/>
</dbReference>
<dbReference type="CDD" id="cd01335">
    <property type="entry name" value="Radical_SAM"/>
    <property type="match status" value="1"/>
</dbReference>
<dbReference type="CDD" id="cd21117">
    <property type="entry name" value="Twitch_MoaA"/>
    <property type="match status" value="1"/>
</dbReference>
<dbReference type="FunFam" id="3.20.20.70:FF:000057">
    <property type="entry name" value="GTP 3',8-cyclase"/>
    <property type="match status" value="1"/>
</dbReference>
<dbReference type="Gene3D" id="3.20.20.70">
    <property type="entry name" value="Aldolase class I"/>
    <property type="match status" value="1"/>
</dbReference>
<dbReference type="HAMAP" id="MF_01225_B">
    <property type="entry name" value="MoaA_B"/>
    <property type="match status" value="1"/>
</dbReference>
<dbReference type="InterPro" id="IPR013785">
    <property type="entry name" value="Aldolase_TIM"/>
</dbReference>
<dbReference type="InterPro" id="IPR006638">
    <property type="entry name" value="Elp3/MiaA/NifB-like_rSAM"/>
</dbReference>
<dbReference type="InterPro" id="IPR013483">
    <property type="entry name" value="MoaA"/>
</dbReference>
<dbReference type="InterPro" id="IPR000385">
    <property type="entry name" value="MoaA_NifB_PqqE_Fe-S-bd_CS"/>
</dbReference>
<dbReference type="InterPro" id="IPR010505">
    <property type="entry name" value="MoaA_twitch"/>
</dbReference>
<dbReference type="InterPro" id="IPR050105">
    <property type="entry name" value="MoCo_biosynth_MoaA/MoaC"/>
</dbReference>
<dbReference type="InterPro" id="IPR007197">
    <property type="entry name" value="rSAM"/>
</dbReference>
<dbReference type="NCBIfam" id="TIGR02666">
    <property type="entry name" value="moaA"/>
    <property type="match status" value="1"/>
</dbReference>
<dbReference type="PANTHER" id="PTHR22960:SF28">
    <property type="entry name" value="GTP 3',8-CYCLASE"/>
    <property type="match status" value="1"/>
</dbReference>
<dbReference type="PANTHER" id="PTHR22960">
    <property type="entry name" value="MOLYBDOPTERIN COFACTOR SYNTHESIS PROTEIN A"/>
    <property type="match status" value="1"/>
</dbReference>
<dbReference type="Pfam" id="PF06463">
    <property type="entry name" value="Mob_synth_C"/>
    <property type="match status" value="1"/>
</dbReference>
<dbReference type="Pfam" id="PF04055">
    <property type="entry name" value="Radical_SAM"/>
    <property type="match status" value="1"/>
</dbReference>
<dbReference type="SFLD" id="SFLDG01383">
    <property type="entry name" value="cyclic_pyranopterin_phosphate"/>
    <property type="match status" value="1"/>
</dbReference>
<dbReference type="SFLD" id="SFLDS00029">
    <property type="entry name" value="Radical_SAM"/>
    <property type="match status" value="1"/>
</dbReference>
<dbReference type="SMART" id="SM00729">
    <property type="entry name" value="Elp3"/>
    <property type="match status" value="1"/>
</dbReference>
<dbReference type="SUPFAM" id="SSF102114">
    <property type="entry name" value="Radical SAM enzymes"/>
    <property type="match status" value="1"/>
</dbReference>
<dbReference type="PROSITE" id="PS01305">
    <property type="entry name" value="MOAA_NIFB_PQQE"/>
    <property type="match status" value="1"/>
</dbReference>
<dbReference type="PROSITE" id="PS51918">
    <property type="entry name" value="RADICAL_SAM"/>
    <property type="match status" value="1"/>
</dbReference>
<gene>
    <name evidence="1" type="primary">moaA</name>
    <name type="ordered locus">SNSL254_A0865</name>
</gene>
<evidence type="ECO:0000255" key="1">
    <source>
        <dbReference type="HAMAP-Rule" id="MF_01225"/>
    </source>
</evidence>
<evidence type="ECO:0000255" key="2">
    <source>
        <dbReference type="PROSITE-ProRule" id="PRU01266"/>
    </source>
</evidence>
<proteinExistence type="inferred from homology"/>
<comment type="function">
    <text evidence="1">Catalyzes the cyclization of GTP to (8S)-3',8-cyclo-7,8-dihydroguanosine 5'-triphosphate.</text>
</comment>
<comment type="catalytic activity">
    <reaction evidence="1">
        <text>GTP + AH2 + S-adenosyl-L-methionine = (8S)-3',8-cyclo-7,8-dihydroguanosine 5'-triphosphate + 5'-deoxyadenosine + L-methionine + A + H(+)</text>
        <dbReference type="Rhea" id="RHEA:49576"/>
        <dbReference type="ChEBI" id="CHEBI:13193"/>
        <dbReference type="ChEBI" id="CHEBI:15378"/>
        <dbReference type="ChEBI" id="CHEBI:17319"/>
        <dbReference type="ChEBI" id="CHEBI:17499"/>
        <dbReference type="ChEBI" id="CHEBI:37565"/>
        <dbReference type="ChEBI" id="CHEBI:57844"/>
        <dbReference type="ChEBI" id="CHEBI:59789"/>
        <dbReference type="ChEBI" id="CHEBI:131766"/>
        <dbReference type="EC" id="4.1.99.22"/>
    </reaction>
</comment>
<comment type="cofactor">
    <cofactor evidence="1">
        <name>[4Fe-4S] cluster</name>
        <dbReference type="ChEBI" id="CHEBI:49883"/>
    </cofactor>
    <text evidence="1">Binds 2 [4Fe-4S] clusters. Binds 1 [4Fe-4S] cluster coordinated with 3 cysteines and an exchangeable S-adenosyl-L-methionine and 1 [4Fe-4S] cluster coordinated with 3 cysteines and the GTP-derived substrate.</text>
</comment>
<comment type="pathway">
    <text evidence="1">Cofactor biosynthesis; molybdopterin biosynthesis.</text>
</comment>
<comment type="subunit">
    <text evidence="1">Monomer and homodimer.</text>
</comment>
<comment type="similarity">
    <text evidence="1">Belongs to the radical SAM superfamily. MoaA family.</text>
</comment>
<keyword id="KW-0004">4Fe-4S</keyword>
<keyword id="KW-0342">GTP-binding</keyword>
<keyword id="KW-0408">Iron</keyword>
<keyword id="KW-0411">Iron-sulfur</keyword>
<keyword id="KW-0456">Lyase</keyword>
<keyword id="KW-0479">Metal-binding</keyword>
<keyword id="KW-0501">Molybdenum cofactor biosynthesis</keyword>
<keyword id="KW-0547">Nucleotide-binding</keyword>
<keyword id="KW-0949">S-adenosyl-L-methionine</keyword>
<sequence>MASQLTDAFARKFYYLRLSITDVCNFRCTYCLPDGYKPGGVTNNGFLTVDEIRRVTRAFASLGTEKVRLTGGEPSLRRDFTDIIAAVGENDAIRQIAVTTNGYRLARDAANWREAGLTGVNVSVDSLDARQFHAITGQDKFRQVMAGIDAAFDAGFEKVKVNTVLMRDVNHHQLDTFLAWIQPRPIQLRFIELMETGEGSDLFRKHHISGQVLRDELIKRGWIHQLRQRSDGPAQVFCHPDYAGEIGLIMPYEKDFCATCNRLRVSSVGKLHLCLFGDGGVSLRDLLQDDAQQYALEERISDALREKKQTHFLHQSNTGITQNLSYIGG</sequence>
<accession>B4SZK4</accession>
<organism>
    <name type="scientific">Salmonella newport (strain SL254)</name>
    <dbReference type="NCBI Taxonomy" id="423368"/>
    <lineage>
        <taxon>Bacteria</taxon>
        <taxon>Pseudomonadati</taxon>
        <taxon>Pseudomonadota</taxon>
        <taxon>Gammaproteobacteria</taxon>
        <taxon>Enterobacterales</taxon>
        <taxon>Enterobacteriaceae</taxon>
        <taxon>Salmonella</taxon>
    </lineage>
</organism>
<protein>
    <recommendedName>
        <fullName evidence="1">GTP 3',8-cyclase</fullName>
        <ecNumber evidence="1">4.1.99.22</ecNumber>
    </recommendedName>
    <alternativeName>
        <fullName evidence="1">Molybdenum cofactor biosynthesis protein A</fullName>
    </alternativeName>
</protein>